<name>SIX3_OLIMR</name>
<evidence type="ECO:0000250" key="1"/>
<evidence type="ECO:0000255" key="2"/>
<evidence type="ECO:0000255" key="3">
    <source>
        <dbReference type="PROSITE-ProRule" id="PRU01210"/>
    </source>
</evidence>
<evidence type="ECO:0000305" key="4"/>
<protein>
    <recommendedName>
        <fullName>Toxin BmKIT3</fullName>
        <shortName>BmK IT3</shortName>
    </recommendedName>
    <alternativeName>
        <fullName>Insect toxin 3</fullName>
    </alternativeName>
</protein>
<comment type="function">
    <text evidence="1">Depressant insect beta-toxins cause a transient contraction paralysis followed by a slow flaccid paralysis. They bind voltage-independently at site-4 of sodium channels (Nav) and shift the voltage of activation toward more negative potentials thereby affecting sodium channel activation and promoting spontaneous and repetitive firing (By similarity).</text>
</comment>
<comment type="subcellular location">
    <subcellularLocation>
        <location>Secreted</location>
    </subcellularLocation>
</comment>
<comment type="tissue specificity">
    <text>Expressed by the venom gland.</text>
</comment>
<comment type="domain">
    <text evidence="4">Has the structural arrangement of an alpha-helix connected to antiparallel beta-sheets by disulfide bonds (CS-alpha/beta).</text>
</comment>
<comment type="similarity">
    <text evidence="4">Belongs to the long (4 C-C) scorpion toxin superfamily. Sodium channel inhibitor family. Beta subfamily.</text>
</comment>
<comment type="sequence caution" evidence="4">
    <conflict type="erroneous initiation">
        <sequence resource="EMBL-CDS" id="CAA63059"/>
    </conflict>
</comment>
<accession>Q17231</accession>
<reference key="1">
    <citation type="journal article" date="1996" name="Chin. Sci. Bull.">
        <title>Cloning and sequencing of two depressant insect selective neurotoxin cDNAs from Buthus martensii Karsch.</title>
        <authorList>
            <person name="Zhu X."/>
            <person name="Zhang T."/>
            <person name="Zhu Y."/>
        </authorList>
    </citation>
    <scope>NUCLEOTIDE SEQUENCE [MRNA]</scope>
    <source>
        <tissue>Venom gland</tissue>
    </source>
</reference>
<keyword id="KW-0027">Amidation</keyword>
<keyword id="KW-1015">Disulfide bond</keyword>
<keyword id="KW-0872">Ion channel impairing toxin</keyword>
<keyword id="KW-0528">Neurotoxin</keyword>
<keyword id="KW-0964">Secreted</keyword>
<keyword id="KW-0800">Toxin</keyword>
<keyword id="KW-0738">Voltage-gated sodium channel impairing toxin</keyword>
<proteinExistence type="evidence at transcript level"/>
<dbReference type="EMBL" id="X92077">
    <property type="protein sequence ID" value="CAA63059.1"/>
    <property type="status" value="ALT_INIT"/>
    <property type="molecule type" value="mRNA"/>
</dbReference>
<dbReference type="SMR" id="Q17231"/>
<dbReference type="GO" id="GO:0005576">
    <property type="term" value="C:extracellular region"/>
    <property type="evidence" value="ECO:0007669"/>
    <property type="project" value="UniProtKB-SubCell"/>
</dbReference>
<dbReference type="GO" id="GO:0019871">
    <property type="term" value="F:sodium channel inhibitor activity"/>
    <property type="evidence" value="ECO:0007669"/>
    <property type="project" value="InterPro"/>
</dbReference>
<dbReference type="GO" id="GO:0090729">
    <property type="term" value="F:toxin activity"/>
    <property type="evidence" value="ECO:0007669"/>
    <property type="project" value="UniProtKB-KW"/>
</dbReference>
<dbReference type="GO" id="GO:0006952">
    <property type="term" value="P:defense response"/>
    <property type="evidence" value="ECO:0007669"/>
    <property type="project" value="InterPro"/>
</dbReference>
<dbReference type="CDD" id="cd23106">
    <property type="entry name" value="neurotoxins_LC_scorpion"/>
    <property type="match status" value="1"/>
</dbReference>
<dbReference type="FunFam" id="3.30.30.10:FF:000002">
    <property type="entry name" value="Alpha-like toxin BmK-M1"/>
    <property type="match status" value="1"/>
</dbReference>
<dbReference type="Gene3D" id="3.30.30.10">
    <property type="entry name" value="Knottin, scorpion toxin-like"/>
    <property type="match status" value="1"/>
</dbReference>
<dbReference type="InterPro" id="IPR044062">
    <property type="entry name" value="LCN-type_CS_alpha_beta_dom"/>
</dbReference>
<dbReference type="InterPro" id="IPR003614">
    <property type="entry name" value="Scorpion_toxin-like"/>
</dbReference>
<dbReference type="InterPro" id="IPR036574">
    <property type="entry name" value="Scorpion_toxin-like_sf"/>
</dbReference>
<dbReference type="InterPro" id="IPR018218">
    <property type="entry name" value="Scorpion_toxinL"/>
</dbReference>
<dbReference type="InterPro" id="IPR002061">
    <property type="entry name" value="Scorpion_toxinL/defensin"/>
</dbReference>
<dbReference type="Pfam" id="PF00537">
    <property type="entry name" value="Toxin_3"/>
    <property type="match status" value="1"/>
</dbReference>
<dbReference type="PRINTS" id="PR00285">
    <property type="entry name" value="SCORPNTOXIN"/>
</dbReference>
<dbReference type="SMART" id="SM00505">
    <property type="entry name" value="Knot1"/>
    <property type="match status" value="1"/>
</dbReference>
<dbReference type="SUPFAM" id="SSF57095">
    <property type="entry name" value="Scorpion toxin-like"/>
    <property type="match status" value="1"/>
</dbReference>
<dbReference type="PROSITE" id="PS51863">
    <property type="entry name" value="LCN_CSAB"/>
    <property type="match status" value="1"/>
</dbReference>
<sequence>DGYIRGSNGCKVSCLWGNEGCNKECRAYGASYGYCWTWGLACWCEGLPDDKTWKSESNTCGRKK</sequence>
<organism>
    <name type="scientific">Olivierus martensii</name>
    <name type="common">Manchurian scorpion</name>
    <name type="synonym">Mesobuthus martensii</name>
    <dbReference type="NCBI Taxonomy" id="34649"/>
    <lineage>
        <taxon>Eukaryota</taxon>
        <taxon>Metazoa</taxon>
        <taxon>Ecdysozoa</taxon>
        <taxon>Arthropoda</taxon>
        <taxon>Chelicerata</taxon>
        <taxon>Arachnida</taxon>
        <taxon>Scorpiones</taxon>
        <taxon>Buthida</taxon>
        <taxon>Buthoidea</taxon>
        <taxon>Buthidae</taxon>
        <taxon>Olivierus</taxon>
    </lineage>
</organism>
<feature type="chain" id="PRO_0000035201" description="Toxin BmKIT3">
    <location>
        <begin position="1"/>
        <end position="60"/>
    </location>
</feature>
<feature type="domain" description="LCN-type CS-alpha/beta" evidence="3">
    <location>
        <begin position="1"/>
        <end position="61"/>
    </location>
</feature>
<feature type="modified residue" description="Cysteine amide" evidence="2">
    <location>
        <position position="60"/>
    </location>
</feature>
<feature type="disulfide bond" evidence="3">
    <location>
        <begin position="10"/>
        <end position="60"/>
    </location>
</feature>
<feature type="disulfide bond" evidence="3">
    <location>
        <begin position="14"/>
        <end position="35"/>
    </location>
</feature>
<feature type="disulfide bond" evidence="3">
    <location>
        <begin position="21"/>
        <end position="42"/>
    </location>
</feature>
<feature type="disulfide bond" evidence="3">
    <location>
        <begin position="25"/>
        <end position="44"/>
    </location>
</feature>